<proteinExistence type="inferred from homology"/>
<dbReference type="EMBL" id="CP000077">
    <property type="protein sequence ID" value="AAY79734.1"/>
    <property type="molecule type" value="Genomic_DNA"/>
</dbReference>
<dbReference type="RefSeq" id="WP_011277236.1">
    <property type="nucleotide sequence ID" value="NC_007181.1"/>
</dbReference>
<dbReference type="SMR" id="Q4JBU5"/>
<dbReference type="STRING" id="330779.Saci_0318"/>
<dbReference type="GeneID" id="14550848"/>
<dbReference type="GeneID" id="78440669"/>
<dbReference type="KEGG" id="sai:Saci_0318"/>
<dbReference type="PATRIC" id="fig|330779.12.peg.314"/>
<dbReference type="eggNOG" id="arCOG04358">
    <property type="taxonomic scope" value="Archaea"/>
</dbReference>
<dbReference type="HOGENOM" id="CLU_056887_3_0_2"/>
<dbReference type="Proteomes" id="UP000001018">
    <property type="component" value="Chromosome"/>
</dbReference>
<dbReference type="GO" id="GO:0005737">
    <property type="term" value="C:cytoplasm"/>
    <property type="evidence" value="ECO:0007669"/>
    <property type="project" value="UniProtKB-SubCell"/>
</dbReference>
<dbReference type="GO" id="GO:0097163">
    <property type="term" value="F:sulfur carrier activity"/>
    <property type="evidence" value="ECO:0007669"/>
    <property type="project" value="UniProtKB-UniRule"/>
</dbReference>
<dbReference type="GO" id="GO:0016783">
    <property type="term" value="F:sulfurtransferase activity"/>
    <property type="evidence" value="ECO:0007669"/>
    <property type="project" value="InterPro"/>
</dbReference>
<dbReference type="GO" id="GO:0006777">
    <property type="term" value="P:Mo-molybdopterin cofactor biosynthetic process"/>
    <property type="evidence" value="ECO:0007669"/>
    <property type="project" value="UniProtKB-UniRule"/>
</dbReference>
<dbReference type="Gene3D" id="3.10.20.10">
    <property type="match status" value="1"/>
</dbReference>
<dbReference type="Gene3D" id="3.40.140.10">
    <property type="entry name" value="Cytidine Deaminase, domain 2"/>
    <property type="match status" value="1"/>
</dbReference>
<dbReference type="HAMAP" id="MF_00187">
    <property type="entry name" value="FdhD"/>
    <property type="match status" value="1"/>
</dbReference>
<dbReference type="InterPro" id="IPR016193">
    <property type="entry name" value="Cytidine_deaminase-like"/>
</dbReference>
<dbReference type="InterPro" id="IPR003786">
    <property type="entry name" value="FdhD"/>
</dbReference>
<dbReference type="NCBIfam" id="TIGR00129">
    <property type="entry name" value="fdhD_narQ"/>
    <property type="match status" value="1"/>
</dbReference>
<dbReference type="PANTHER" id="PTHR30592">
    <property type="entry name" value="FORMATE DEHYDROGENASE"/>
    <property type="match status" value="1"/>
</dbReference>
<dbReference type="PANTHER" id="PTHR30592:SF1">
    <property type="entry name" value="SULFUR CARRIER PROTEIN FDHD"/>
    <property type="match status" value="1"/>
</dbReference>
<dbReference type="Pfam" id="PF02634">
    <property type="entry name" value="FdhD-NarQ"/>
    <property type="match status" value="1"/>
</dbReference>
<dbReference type="PIRSF" id="PIRSF015626">
    <property type="entry name" value="FdhD"/>
    <property type="match status" value="1"/>
</dbReference>
<dbReference type="SUPFAM" id="SSF53927">
    <property type="entry name" value="Cytidine deaminase-like"/>
    <property type="match status" value="1"/>
</dbReference>
<comment type="function">
    <text evidence="1">Required for formate dehydrogenase (FDH) activity. Acts as a sulfur carrier protein that transfers sulfur from IscS to the molybdenum cofactor prior to its insertion into FDH.</text>
</comment>
<comment type="subcellular location">
    <subcellularLocation>
        <location evidence="1">Cytoplasm</location>
    </subcellularLocation>
</comment>
<comment type="similarity">
    <text evidence="1">Belongs to the FdhD family.</text>
</comment>
<accession>Q4JBU5</accession>
<sequence length="253" mass="27856">MQIRKVKISKVKDGYRASSEDFVAVEEPLQIFVNEKNLAIIMRTPGNDLELTLGFLYYEDYINSLRDVEEISMLSDNEIHVRLTNGKFVETRNFVINSSCGICGRGFLNAIELLKSDAKTSNEVIISLPEKLRSNQGVFNITGGLHAAALFTLSGELISIYEDVGRHNAVDKIIGSLIHKRRLPFTEGILQVSGRIGYEIVSKAIKAGIPIISGISAPTSKAIEIAEDAGATLVGFVRGNSFNVYTHPERIDL</sequence>
<organism>
    <name type="scientific">Sulfolobus acidocaldarius (strain ATCC 33909 / DSM 639 / JCM 8929 / NBRC 15157 / NCIMB 11770)</name>
    <dbReference type="NCBI Taxonomy" id="330779"/>
    <lineage>
        <taxon>Archaea</taxon>
        <taxon>Thermoproteota</taxon>
        <taxon>Thermoprotei</taxon>
        <taxon>Sulfolobales</taxon>
        <taxon>Sulfolobaceae</taxon>
        <taxon>Sulfolobus</taxon>
    </lineage>
</organism>
<name>FDHD_SULAC</name>
<keyword id="KW-0963">Cytoplasm</keyword>
<keyword id="KW-0501">Molybdenum cofactor biosynthesis</keyword>
<keyword id="KW-1185">Reference proteome</keyword>
<reference key="1">
    <citation type="journal article" date="2005" name="J. Bacteriol.">
        <title>The genome of Sulfolobus acidocaldarius, a model organism of the Crenarchaeota.</title>
        <authorList>
            <person name="Chen L."/>
            <person name="Bruegger K."/>
            <person name="Skovgaard M."/>
            <person name="Redder P."/>
            <person name="She Q."/>
            <person name="Torarinsson E."/>
            <person name="Greve B."/>
            <person name="Awayez M."/>
            <person name="Zibat A."/>
            <person name="Klenk H.-P."/>
            <person name="Garrett R.A."/>
        </authorList>
    </citation>
    <scope>NUCLEOTIDE SEQUENCE [LARGE SCALE GENOMIC DNA]</scope>
    <source>
        <strain>ATCC 33909 / DSM 639 / JCM 8929 / NBRC 15157 / NCIMB 11770</strain>
    </source>
</reference>
<feature type="chain" id="PRO_0000152939" description="Sulfur carrier protein FdhD">
    <location>
        <begin position="1"/>
        <end position="253"/>
    </location>
</feature>
<feature type="active site" description="Cysteine persulfide intermediate" evidence="1">
    <location>
        <position position="100"/>
    </location>
</feature>
<gene>
    <name evidence="1" type="primary">fdhD</name>
    <name type="ordered locus">Saci_0318</name>
</gene>
<protein>
    <recommendedName>
        <fullName evidence="1">Sulfur carrier protein FdhD</fullName>
    </recommendedName>
</protein>
<evidence type="ECO:0000255" key="1">
    <source>
        <dbReference type="HAMAP-Rule" id="MF_00187"/>
    </source>
</evidence>